<organism>
    <name type="scientific">Trichodesmium erythraeum (strain IMS101)</name>
    <dbReference type="NCBI Taxonomy" id="203124"/>
    <lineage>
        <taxon>Bacteria</taxon>
        <taxon>Bacillati</taxon>
        <taxon>Cyanobacteriota</taxon>
        <taxon>Cyanophyceae</taxon>
        <taxon>Oscillatoriophycideae</taxon>
        <taxon>Oscillatoriales</taxon>
        <taxon>Microcoleaceae</taxon>
        <taxon>Trichodesmium</taxon>
    </lineage>
</organism>
<gene>
    <name evidence="1" type="primary">mnmE</name>
    <name evidence="1" type="synonym">trmE</name>
    <name type="ordered locus">Tery_4774</name>
</gene>
<protein>
    <recommendedName>
        <fullName evidence="1">tRNA modification GTPase MnmE</fullName>
        <ecNumber evidence="1">3.6.-.-</ecNumber>
    </recommendedName>
</protein>
<keyword id="KW-0963">Cytoplasm</keyword>
<keyword id="KW-0342">GTP-binding</keyword>
<keyword id="KW-0378">Hydrolase</keyword>
<keyword id="KW-0460">Magnesium</keyword>
<keyword id="KW-0479">Metal-binding</keyword>
<keyword id="KW-0547">Nucleotide-binding</keyword>
<keyword id="KW-0630">Potassium</keyword>
<keyword id="KW-0819">tRNA processing</keyword>
<comment type="function">
    <text evidence="1">Exhibits a very high intrinsic GTPase hydrolysis rate. Involved in the addition of a carboxymethylaminomethyl (cmnm) group at the wobble position (U34) of certain tRNAs, forming tRNA-cmnm(5)s(2)U34.</text>
</comment>
<comment type="cofactor">
    <cofactor evidence="1">
        <name>K(+)</name>
        <dbReference type="ChEBI" id="CHEBI:29103"/>
    </cofactor>
    <text evidence="1">Binds 1 potassium ion per subunit.</text>
</comment>
<comment type="subunit">
    <text evidence="1">Homodimer. Heterotetramer of two MnmE and two MnmG subunits.</text>
</comment>
<comment type="subcellular location">
    <subcellularLocation>
        <location evidence="1">Cytoplasm</location>
    </subcellularLocation>
</comment>
<comment type="similarity">
    <text evidence="1">Belongs to the TRAFAC class TrmE-Era-EngA-EngB-Septin-like GTPase superfamily. TrmE GTPase family.</text>
</comment>
<sequence length="467" mass="51044">MVITEMTPRNTIAAIATAIVPQQGSVGIVRMSGSEAMKIAQTLFHAPGKQVWETHHILYGYIRHPHTGQLVDETLLLIMKAPRSYTREDVVEFHCHGGIIAIQQVLQLCIEAGAELAQPGEFTLRAFLNGRLDLTQAESIAELVGSQSPAAAQVALAGLQGKLASPIRHLRACCLDILAEIEARIDFEEDLPPLDESEISQKLDDILVDLSMVLATASRGELLRTGLKVAIIGRPNVGKSSLLNAWSHSDRAIVTDLPGTTRDVVESQLVVGGIPVQVLDTAGIRETEDRVEKIGVERSCQAAESADIVLLTIDAQVGWTELDEVIYQQVKHRFLILIINKVDQVDLVHSELIRSIFYPETIKNVVATAAINNQGIEELEAAILNAVNLDNVQPENLDFAVNQRQAAALTRAKIALEQCLNTIKNNLPLDFWTIDLRGSIYALGEVTGEDVTESVLDIIFSRFCIGK</sequence>
<accession>Q10VJ7</accession>
<proteinExistence type="inferred from homology"/>
<feature type="chain" id="PRO_0000345934" description="tRNA modification GTPase MnmE">
    <location>
        <begin position="1"/>
        <end position="467"/>
    </location>
</feature>
<feature type="domain" description="TrmE-type G">
    <location>
        <begin position="226"/>
        <end position="388"/>
    </location>
</feature>
<feature type="binding site" evidence="1">
    <location>
        <position position="30"/>
    </location>
    <ligand>
        <name>(6S)-5-formyl-5,6,7,8-tetrahydrofolate</name>
        <dbReference type="ChEBI" id="CHEBI:57457"/>
    </ligand>
</feature>
<feature type="binding site" evidence="1">
    <location>
        <position position="92"/>
    </location>
    <ligand>
        <name>(6S)-5-formyl-5,6,7,8-tetrahydrofolate</name>
        <dbReference type="ChEBI" id="CHEBI:57457"/>
    </ligand>
</feature>
<feature type="binding site" evidence="1">
    <location>
        <position position="131"/>
    </location>
    <ligand>
        <name>(6S)-5-formyl-5,6,7,8-tetrahydrofolate</name>
        <dbReference type="ChEBI" id="CHEBI:57457"/>
    </ligand>
</feature>
<feature type="binding site" evidence="1">
    <location>
        <begin position="236"/>
        <end position="241"/>
    </location>
    <ligand>
        <name>GTP</name>
        <dbReference type="ChEBI" id="CHEBI:37565"/>
    </ligand>
</feature>
<feature type="binding site" evidence="1">
    <location>
        <position position="236"/>
    </location>
    <ligand>
        <name>K(+)</name>
        <dbReference type="ChEBI" id="CHEBI:29103"/>
    </ligand>
</feature>
<feature type="binding site" evidence="1">
    <location>
        <position position="240"/>
    </location>
    <ligand>
        <name>Mg(2+)</name>
        <dbReference type="ChEBI" id="CHEBI:18420"/>
    </ligand>
</feature>
<feature type="binding site" evidence="1">
    <location>
        <begin position="255"/>
        <end position="261"/>
    </location>
    <ligand>
        <name>GTP</name>
        <dbReference type="ChEBI" id="CHEBI:37565"/>
    </ligand>
</feature>
<feature type="binding site" evidence="1">
    <location>
        <position position="255"/>
    </location>
    <ligand>
        <name>K(+)</name>
        <dbReference type="ChEBI" id="CHEBI:29103"/>
    </ligand>
</feature>
<feature type="binding site" evidence="1">
    <location>
        <position position="257"/>
    </location>
    <ligand>
        <name>K(+)</name>
        <dbReference type="ChEBI" id="CHEBI:29103"/>
    </ligand>
</feature>
<feature type="binding site" evidence="1">
    <location>
        <position position="260"/>
    </location>
    <ligand>
        <name>K(+)</name>
        <dbReference type="ChEBI" id="CHEBI:29103"/>
    </ligand>
</feature>
<feature type="binding site" evidence="1">
    <location>
        <position position="261"/>
    </location>
    <ligand>
        <name>Mg(2+)</name>
        <dbReference type="ChEBI" id="CHEBI:18420"/>
    </ligand>
</feature>
<feature type="binding site" evidence="1">
    <location>
        <begin position="280"/>
        <end position="283"/>
    </location>
    <ligand>
        <name>GTP</name>
        <dbReference type="ChEBI" id="CHEBI:37565"/>
    </ligand>
</feature>
<feature type="binding site" evidence="1">
    <location>
        <position position="467"/>
    </location>
    <ligand>
        <name>(6S)-5-formyl-5,6,7,8-tetrahydrofolate</name>
        <dbReference type="ChEBI" id="CHEBI:57457"/>
    </ligand>
</feature>
<evidence type="ECO:0000255" key="1">
    <source>
        <dbReference type="HAMAP-Rule" id="MF_00379"/>
    </source>
</evidence>
<reference key="1">
    <citation type="journal article" date="2015" name="Proc. Natl. Acad. Sci. U.S.A.">
        <title>Trichodesmium genome maintains abundant, widespread noncoding DNA in situ, despite oligotrophic lifestyle.</title>
        <authorList>
            <person name="Walworth N."/>
            <person name="Pfreundt U."/>
            <person name="Nelson W.C."/>
            <person name="Mincer T."/>
            <person name="Heidelberg J.F."/>
            <person name="Fu F."/>
            <person name="Waterbury J.B."/>
            <person name="Glavina del Rio T."/>
            <person name="Goodwin L."/>
            <person name="Kyrpides N.C."/>
            <person name="Land M.L."/>
            <person name="Woyke T."/>
            <person name="Hutchins D.A."/>
            <person name="Hess W.R."/>
            <person name="Webb E.A."/>
        </authorList>
    </citation>
    <scope>NUCLEOTIDE SEQUENCE [LARGE SCALE GENOMIC DNA]</scope>
    <source>
        <strain>IMS101</strain>
    </source>
</reference>
<dbReference type="EC" id="3.6.-.-" evidence="1"/>
<dbReference type="EMBL" id="CP000393">
    <property type="protein sequence ID" value="ABG53727.1"/>
    <property type="molecule type" value="Genomic_DNA"/>
</dbReference>
<dbReference type="RefSeq" id="WP_011614042.1">
    <property type="nucleotide sequence ID" value="NC_008312.1"/>
</dbReference>
<dbReference type="SMR" id="Q10VJ7"/>
<dbReference type="STRING" id="203124.Tery_4774"/>
<dbReference type="KEGG" id="ter:Tery_4774"/>
<dbReference type="eggNOG" id="COG0486">
    <property type="taxonomic scope" value="Bacteria"/>
</dbReference>
<dbReference type="HOGENOM" id="CLU_019624_4_1_3"/>
<dbReference type="GO" id="GO:0005829">
    <property type="term" value="C:cytosol"/>
    <property type="evidence" value="ECO:0007669"/>
    <property type="project" value="TreeGrafter"/>
</dbReference>
<dbReference type="GO" id="GO:0005525">
    <property type="term" value="F:GTP binding"/>
    <property type="evidence" value="ECO:0007669"/>
    <property type="project" value="UniProtKB-UniRule"/>
</dbReference>
<dbReference type="GO" id="GO:0003924">
    <property type="term" value="F:GTPase activity"/>
    <property type="evidence" value="ECO:0007669"/>
    <property type="project" value="UniProtKB-UniRule"/>
</dbReference>
<dbReference type="GO" id="GO:0046872">
    <property type="term" value="F:metal ion binding"/>
    <property type="evidence" value="ECO:0007669"/>
    <property type="project" value="UniProtKB-KW"/>
</dbReference>
<dbReference type="GO" id="GO:0030488">
    <property type="term" value="P:tRNA methylation"/>
    <property type="evidence" value="ECO:0007669"/>
    <property type="project" value="TreeGrafter"/>
</dbReference>
<dbReference type="GO" id="GO:0002098">
    <property type="term" value="P:tRNA wobble uridine modification"/>
    <property type="evidence" value="ECO:0007669"/>
    <property type="project" value="TreeGrafter"/>
</dbReference>
<dbReference type="CDD" id="cd04164">
    <property type="entry name" value="trmE"/>
    <property type="match status" value="1"/>
</dbReference>
<dbReference type="CDD" id="cd14858">
    <property type="entry name" value="TrmE_N"/>
    <property type="match status" value="1"/>
</dbReference>
<dbReference type="FunFam" id="3.30.1360.120:FF:000003">
    <property type="entry name" value="tRNA modification GTPase MnmE"/>
    <property type="match status" value="1"/>
</dbReference>
<dbReference type="FunFam" id="3.40.50.300:FF:000494">
    <property type="entry name" value="tRNA modification GTPase MnmE"/>
    <property type="match status" value="1"/>
</dbReference>
<dbReference type="Gene3D" id="3.40.50.300">
    <property type="entry name" value="P-loop containing nucleotide triphosphate hydrolases"/>
    <property type="match status" value="1"/>
</dbReference>
<dbReference type="Gene3D" id="3.30.1360.120">
    <property type="entry name" value="Probable tRNA modification gtpase trme, domain 1"/>
    <property type="match status" value="1"/>
</dbReference>
<dbReference type="Gene3D" id="1.20.120.430">
    <property type="entry name" value="tRNA modification GTPase MnmE domain 2"/>
    <property type="match status" value="1"/>
</dbReference>
<dbReference type="HAMAP" id="MF_00379">
    <property type="entry name" value="GTPase_MnmE"/>
    <property type="match status" value="1"/>
</dbReference>
<dbReference type="InterPro" id="IPR031168">
    <property type="entry name" value="G_TrmE"/>
</dbReference>
<dbReference type="InterPro" id="IPR006073">
    <property type="entry name" value="GTP-bd"/>
</dbReference>
<dbReference type="InterPro" id="IPR018948">
    <property type="entry name" value="GTP-bd_TrmE_N"/>
</dbReference>
<dbReference type="InterPro" id="IPR004520">
    <property type="entry name" value="GTPase_MnmE"/>
</dbReference>
<dbReference type="InterPro" id="IPR027368">
    <property type="entry name" value="MnmE_dom2"/>
</dbReference>
<dbReference type="InterPro" id="IPR025867">
    <property type="entry name" value="MnmE_helical"/>
</dbReference>
<dbReference type="InterPro" id="IPR027417">
    <property type="entry name" value="P-loop_NTPase"/>
</dbReference>
<dbReference type="InterPro" id="IPR005225">
    <property type="entry name" value="Small_GTP-bd"/>
</dbReference>
<dbReference type="InterPro" id="IPR027266">
    <property type="entry name" value="TrmE/GcvT_dom1"/>
</dbReference>
<dbReference type="NCBIfam" id="TIGR00450">
    <property type="entry name" value="mnmE_trmE_thdF"/>
    <property type="match status" value="1"/>
</dbReference>
<dbReference type="NCBIfam" id="TIGR00231">
    <property type="entry name" value="small_GTP"/>
    <property type="match status" value="1"/>
</dbReference>
<dbReference type="PANTHER" id="PTHR42714">
    <property type="entry name" value="TRNA MODIFICATION GTPASE GTPBP3"/>
    <property type="match status" value="1"/>
</dbReference>
<dbReference type="PANTHER" id="PTHR42714:SF2">
    <property type="entry name" value="TRNA MODIFICATION GTPASE GTPBP3, MITOCHONDRIAL"/>
    <property type="match status" value="1"/>
</dbReference>
<dbReference type="Pfam" id="PF01926">
    <property type="entry name" value="MMR_HSR1"/>
    <property type="match status" value="1"/>
</dbReference>
<dbReference type="Pfam" id="PF12631">
    <property type="entry name" value="MnmE_helical"/>
    <property type="match status" value="1"/>
</dbReference>
<dbReference type="Pfam" id="PF10396">
    <property type="entry name" value="TrmE_N"/>
    <property type="match status" value="1"/>
</dbReference>
<dbReference type="SUPFAM" id="SSF52540">
    <property type="entry name" value="P-loop containing nucleoside triphosphate hydrolases"/>
    <property type="match status" value="1"/>
</dbReference>
<dbReference type="SUPFAM" id="SSF116878">
    <property type="entry name" value="TrmE connector domain"/>
    <property type="match status" value="1"/>
</dbReference>
<dbReference type="PROSITE" id="PS51709">
    <property type="entry name" value="G_TRME"/>
    <property type="match status" value="1"/>
</dbReference>
<name>MNME_TRIEI</name>